<comment type="function">
    <text evidence="1">Found at the monomer-monomer interface of the photosystem II (PS II) dimer, plays a role in assembly and dimerization of PSII. PSII is a light-driven water plastoquinone oxidoreductase, using light energy to abstract electrons from H(2)O, generating a proton gradient subsequently used for ATP formation.</text>
</comment>
<comment type="subunit">
    <text evidence="1">PSII is composed of 1 copy each of membrane proteins PsbA, PsbB, PsbC, PsbD, PsbE, PsbF, PsbH, PsbI, PsbJ, PsbK, PsbL, PsbM, PsbT, PsbY, PsbZ, Psb30/Ycf12, at least 3 peripheral proteins of the oxygen-evolving complex and a large number of cofactors. It forms dimeric complexes.</text>
</comment>
<comment type="subcellular location">
    <subcellularLocation>
        <location evidence="1">Plastid</location>
        <location evidence="1">Chloroplast thylakoid membrane</location>
        <topology evidence="1">Single-pass membrane protein</topology>
    </subcellularLocation>
</comment>
<comment type="similarity">
    <text evidence="1">Belongs to the PsbT family.</text>
</comment>
<evidence type="ECO:0000255" key="1">
    <source>
        <dbReference type="HAMAP-Rule" id="MF_00808"/>
    </source>
</evidence>
<organism>
    <name type="scientific">Chlorella vulgaris</name>
    <name type="common">Green alga</name>
    <dbReference type="NCBI Taxonomy" id="3077"/>
    <lineage>
        <taxon>Eukaryota</taxon>
        <taxon>Viridiplantae</taxon>
        <taxon>Chlorophyta</taxon>
        <taxon>core chlorophytes</taxon>
        <taxon>Trebouxiophyceae</taxon>
        <taxon>Chlorellales</taxon>
        <taxon>Chlorellaceae</taxon>
        <taxon>Chlorella clade</taxon>
        <taxon>Chlorella</taxon>
    </lineage>
</organism>
<reference key="1">
    <citation type="journal article" date="1997" name="Proc. Natl. Acad. Sci. U.S.A.">
        <title>Complete nucleotide sequence of the chloroplast genome from the green alga Chlorella vulgaris: the existence of genes possibly involved in chloroplast division.</title>
        <authorList>
            <person name="Wakasugi T."/>
            <person name="Nagai T."/>
            <person name="Kapoor M."/>
            <person name="Sugita M."/>
            <person name="Ito M."/>
            <person name="Ito S."/>
            <person name="Tsudzuki J."/>
            <person name="Nakashima K."/>
            <person name="Tsudzuki T."/>
            <person name="Suzuki Y."/>
            <person name="Hamada A."/>
            <person name="Ohta T."/>
            <person name="Inamura A."/>
            <person name="Yoshinaga K."/>
            <person name="Sugiura M."/>
        </authorList>
    </citation>
    <scope>NUCLEOTIDE SEQUENCE [LARGE SCALE GENOMIC DNA]</scope>
    <source>
        <strain>IAM C-27 / Tamiya</strain>
    </source>
</reference>
<accession>P56327</accession>
<dbReference type="EMBL" id="AB001684">
    <property type="protein sequence ID" value="BAA57924.1"/>
    <property type="molecule type" value="Genomic_DNA"/>
</dbReference>
<dbReference type="PIR" id="T07276">
    <property type="entry name" value="T07276"/>
</dbReference>
<dbReference type="RefSeq" id="NP_045848.1">
    <property type="nucleotide sequence ID" value="NC_001865.1"/>
</dbReference>
<dbReference type="PDB" id="8BD3">
    <property type="method" value="EM"/>
    <property type="resolution" value="2.73 A"/>
    <property type="chains" value="T/t=1-30"/>
</dbReference>
<dbReference type="PDBsum" id="8BD3"/>
<dbReference type="EMDB" id="EMD-15973"/>
<dbReference type="SMR" id="P56327"/>
<dbReference type="GeneID" id="809146"/>
<dbReference type="OrthoDB" id="2012514at2759"/>
<dbReference type="GO" id="GO:0009535">
    <property type="term" value="C:chloroplast thylakoid membrane"/>
    <property type="evidence" value="ECO:0007669"/>
    <property type="project" value="UniProtKB-SubCell"/>
</dbReference>
<dbReference type="GO" id="GO:0009539">
    <property type="term" value="C:photosystem II reaction center"/>
    <property type="evidence" value="ECO:0007669"/>
    <property type="project" value="InterPro"/>
</dbReference>
<dbReference type="GO" id="GO:0015979">
    <property type="term" value="P:photosynthesis"/>
    <property type="evidence" value="ECO:0007669"/>
    <property type="project" value="UniProtKB-UniRule"/>
</dbReference>
<dbReference type="HAMAP" id="MF_00808">
    <property type="entry name" value="PSII_PsbT"/>
    <property type="match status" value="1"/>
</dbReference>
<dbReference type="InterPro" id="IPR001743">
    <property type="entry name" value="PSII_PsbT"/>
</dbReference>
<dbReference type="InterPro" id="IPR037268">
    <property type="entry name" value="PSII_PsbT_sf"/>
</dbReference>
<dbReference type="PANTHER" id="PTHR36411">
    <property type="match status" value="1"/>
</dbReference>
<dbReference type="PANTHER" id="PTHR36411:SF2">
    <property type="entry name" value="PHOTOSYSTEM II REACTION CENTER PROTEIN T"/>
    <property type="match status" value="1"/>
</dbReference>
<dbReference type="Pfam" id="PF01405">
    <property type="entry name" value="PsbT"/>
    <property type="match status" value="1"/>
</dbReference>
<dbReference type="SUPFAM" id="SSF161029">
    <property type="entry name" value="Photosystem II reaction center protein T, PsbT"/>
    <property type="match status" value="1"/>
</dbReference>
<name>PSBT_CHLVU</name>
<keyword id="KW-0002">3D-structure</keyword>
<keyword id="KW-0150">Chloroplast</keyword>
<keyword id="KW-0472">Membrane</keyword>
<keyword id="KW-0602">Photosynthesis</keyword>
<keyword id="KW-0604">Photosystem II</keyword>
<keyword id="KW-0934">Plastid</keyword>
<keyword id="KW-0793">Thylakoid</keyword>
<keyword id="KW-0812">Transmembrane</keyword>
<keyword id="KW-1133">Transmembrane helix</keyword>
<feature type="chain" id="PRO_0000217918" description="Photosystem II reaction center protein T">
    <location>
        <begin position="1"/>
        <end position="31"/>
    </location>
</feature>
<feature type="transmembrane region" description="Helical" evidence="1">
    <location>
        <begin position="3"/>
        <end position="23"/>
    </location>
</feature>
<gene>
    <name evidence="1" type="primary">psbT</name>
</gene>
<protein>
    <recommendedName>
        <fullName evidence="1">Photosystem II reaction center protein T</fullName>
        <shortName evidence="1">PSII-T</shortName>
    </recommendedName>
</protein>
<geneLocation type="chloroplast"/>
<proteinExistence type="evidence at protein level"/>
<sequence length="31" mass="3602">MEALVYTFLLVGTLGIIFFAIFFREPPRIVK</sequence>